<keyword id="KW-1003">Cell membrane</keyword>
<keyword id="KW-1015">Disulfide bond</keyword>
<keyword id="KW-0297">G-protein coupled receptor</keyword>
<keyword id="KW-0472">Membrane</keyword>
<keyword id="KW-0675">Receptor</keyword>
<keyword id="KW-0807">Transducer</keyword>
<keyword id="KW-0812">Transmembrane</keyword>
<keyword id="KW-1133">Transmembrane helix</keyword>
<sequence length="390" mass="42563">AIATVITFLILFTIFGNSLVILAVLTSRSLRAPQNLFLVSLAAADIMVATLIIPFSLANELLGYWYFRRTWCEVYLALDVLFCTSSIVHLCAISLDRYWAVSRALEYNSKRTPRRIKCIILTVWLIAAAISLPPLIYKGDQGPQPRGRPQCKLNQEAWYILSSSIGSFFAPCLIMILVYLRIYLIAKRSHRRGPGAKGGPRKGESKQPHSLDSGPSALANLPTLASSLAVAGEANGHSMPPGEKERETSEDPGTPTLPPSWPVLPNSGQGQKGGVCGASLEEEADKEEEEECGPPAVPASPATACNPPLQQPQGSQVLATLRGQVFLGRGVGAAGGQWWRRWAQLTREKRFTFVLAVVIGVFVLCWFPFFFSYSLGAICPQHCKVPHGLF</sequence>
<accession>O77713</accession>
<name>ADA2B_DUGDU</name>
<organism>
    <name type="scientific">Dugong dugon</name>
    <name type="common">Dugong</name>
    <name type="synonym">Trichechus dugon</name>
    <dbReference type="NCBI Taxonomy" id="29137"/>
    <lineage>
        <taxon>Eukaryota</taxon>
        <taxon>Metazoa</taxon>
        <taxon>Chordata</taxon>
        <taxon>Craniata</taxon>
        <taxon>Vertebrata</taxon>
        <taxon>Euteleostomi</taxon>
        <taxon>Mammalia</taxon>
        <taxon>Eutheria</taxon>
        <taxon>Afrotheria</taxon>
        <taxon>Sirenia</taxon>
        <taxon>Dugongidae</taxon>
        <taxon>Dugong</taxon>
    </lineage>
</organism>
<dbReference type="EMBL" id="Y15947">
    <property type="protein sequence ID" value="CAA75900.2"/>
    <property type="molecule type" value="Genomic_DNA"/>
</dbReference>
<dbReference type="SMR" id="O77713"/>
<dbReference type="GO" id="GO:0009986">
    <property type="term" value="C:cell surface"/>
    <property type="evidence" value="ECO:0000250"/>
    <property type="project" value="UniProtKB"/>
</dbReference>
<dbReference type="GO" id="GO:0005886">
    <property type="term" value="C:plasma membrane"/>
    <property type="evidence" value="ECO:0007669"/>
    <property type="project" value="UniProtKB-SubCell"/>
</dbReference>
<dbReference type="GO" id="GO:0004938">
    <property type="term" value="F:alpha2-adrenergic receptor activity"/>
    <property type="evidence" value="ECO:0007669"/>
    <property type="project" value="InterPro"/>
</dbReference>
<dbReference type="GO" id="GO:0051379">
    <property type="term" value="F:epinephrine binding"/>
    <property type="evidence" value="ECO:0007669"/>
    <property type="project" value="TreeGrafter"/>
</dbReference>
<dbReference type="GO" id="GO:0030168">
    <property type="term" value="P:platelet activation"/>
    <property type="evidence" value="ECO:0007669"/>
    <property type="project" value="InterPro"/>
</dbReference>
<dbReference type="GO" id="GO:0006940">
    <property type="term" value="P:regulation of smooth muscle contraction"/>
    <property type="evidence" value="ECO:0007669"/>
    <property type="project" value="InterPro"/>
</dbReference>
<dbReference type="GO" id="GO:0019229">
    <property type="term" value="P:regulation of vasoconstriction"/>
    <property type="evidence" value="ECO:0007669"/>
    <property type="project" value="InterPro"/>
</dbReference>
<dbReference type="CDD" id="cd15321">
    <property type="entry name" value="7tmA_alpha2B_AR"/>
    <property type="match status" value="1"/>
</dbReference>
<dbReference type="FunFam" id="1.20.1070.10:FF:000330">
    <property type="entry name" value="Alpha 2B adrenergic receptor"/>
    <property type="match status" value="1"/>
</dbReference>
<dbReference type="FunFam" id="1.20.1070.10:FF:000185">
    <property type="entry name" value="Alpha-2B adrenergic receptor"/>
    <property type="match status" value="1"/>
</dbReference>
<dbReference type="Gene3D" id="1.20.1070.10">
    <property type="entry name" value="Rhodopsin 7-helix transmembrane proteins"/>
    <property type="match status" value="2"/>
</dbReference>
<dbReference type="InterPro" id="IPR002233">
    <property type="entry name" value="ADR_fam"/>
</dbReference>
<dbReference type="InterPro" id="IPR000207">
    <property type="entry name" value="ADRA2B_rcpt"/>
</dbReference>
<dbReference type="InterPro" id="IPR000276">
    <property type="entry name" value="GPCR_Rhodpsn"/>
</dbReference>
<dbReference type="InterPro" id="IPR017452">
    <property type="entry name" value="GPCR_Rhodpsn_7TM"/>
</dbReference>
<dbReference type="PANTHER" id="PTHR24248">
    <property type="entry name" value="ADRENERGIC RECEPTOR-RELATED G-PROTEIN COUPLED RECEPTOR"/>
    <property type="match status" value="1"/>
</dbReference>
<dbReference type="PANTHER" id="PTHR24248:SF130">
    <property type="entry name" value="ALPHA-2B ADRENERGIC RECEPTOR"/>
    <property type="match status" value="1"/>
</dbReference>
<dbReference type="Pfam" id="PF00001">
    <property type="entry name" value="7tm_1"/>
    <property type="match status" value="1"/>
</dbReference>
<dbReference type="PRINTS" id="PR01103">
    <property type="entry name" value="ADRENERGICR"/>
</dbReference>
<dbReference type="PRINTS" id="PR00559">
    <property type="entry name" value="ADRENRGCA2BR"/>
</dbReference>
<dbReference type="PRINTS" id="PR00237">
    <property type="entry name" value="GPCRRHODOPSN"/>
</dbReference>
<dbReference type="SMART" id="SM01381">
    <property type="entry name" value="7TM_GPCR_Srsx"/>
    <property type="match status" value="1"/>
</dbReference>
<dbReference type="SUPFAM" id="SSF81321">
    <property type="entry name" value="Family A G protein-coupled receptor-like"/>
    <property type="match status" value="1"/>
</dbReference>
<dbReference type="PROSITE" id="PS00237">
    <property type="entry name" value="G_PROTEIN_RECEP_F1_1"/>
    <property type="match status" value="1"/>
</dbReference>
<dbReference type="PROSITE" id="PS50262">
    <property type="entry name" value="G_PROTEIN_RECEP_F1_2"/>
    <property type="match status" value="1"/>
</dbReference>
<feature type="chain" id="PRO_0000069089" description="Alpha-2B adrenergic receptor">
    <location>
        <begin position="1" status="less than"/>
        <end position="390" status="greater than"/>
    </location>
</feature>
<feature type="transmembrane region" description="Helical; Name=1" evidence="1">
    <location>
        <begin position="1" status="less than"/>
        <end position="25"/>
    </location>
</feature>
<feature type="topological domain" description="Cytoplasmic" evidence="1">
    <location>
        <begin position="26"/>
        <end position="36"/>
    </location>
</feature>
<feature type="transmembrane region" description="Helical; Name=2" evidence="1">
    <location>
        <begin position="37"/>
        <end position="62"/>
    </location>
</feature>
<feature type="topological domain" description="Extracellular" evidence="1">
    <location>
        <begin position="63"/>
        <end position="72"/>
    </location>
</feature>
<feature type="transmembrane region" description="Helical; Name=3" evidence="1">
    <location>
        <begin position="73"/>
        <end position="95"/>
    </location>
</feature>
<feature type="topological domain" description="Cytoplasmic" evidence="1">
    <location>
        <begin position="96"/>
        <end position="117"/>
    </location>
</feature>
<feature type="transmembrane region" description="Helical; Name=4" evidence="1">
    <location>
        <begin position="118"/>
        <end position="140"/>
    </location>
</feature>
<feature type="topological domain" description="Extracellular" evidence="1">
    <location>
        <begin position="141"/>
        <end position="156"/>
    </location>
</feature>
<feature type="transmembrane region" description="Helical; Name=5" evidence="1">
    <location>
        <begin position="157"/>
        <end position="180"/>
    </location>
</feature>
<feature type="topological domain" description="Cytoplasmic" evidence="1">
    <location>
        <begin position="181"/>
        <end position="354"/>
    </location>
</feature>
<feature type="transmembrane region" description="Helical; Name=6" evidence="1">
    <location>
        <begin position="355"/>
        <end position="378"/>
    </location>
</feature>
<feature type="topological domain" description="Extracellular" evidence="1">
    <location>
        <begin position="379"/>
        <end position="390" status="greater than"/>
    </location>
</feature>
<feature type="region of interest" description="Disordered" evidence="4">
    <location>
        <begin position="191"/>
        <end position="218"/>
    </location>
</feature>
<feature type="region of interest" description="Disordered" evidence="4">
    <location>
        <begin position="233"/>
        <end position="311"/>
    </location>
</feature>
<feature type="compositionally biased region" description="Acidic residues" evidence="4">
    <location>
        <begin position="280"/>
        <end position="292"/>
    </location>
</feature>
<feature type="disulfide bond" evidence="3">
    <location>
        <begin position="72"/>
        <end position="151"/>
    </location>
</feature>
<feature type="non-terminal residue">
    <location>
        <position position="1"/>
    </location>
</feature>
<feature type="non-terminal residue">
    <location>
        <position position="390"/>
    </location>
</feature>
<comment type="function">
    <text>Alpha-2 adrenergic receptors mediate the catecholamine-induced inhibition of adenylate cyclase through the action of G proteins.</text>
</comment>
<comment type="subunit">
    <text evidence="2">Interacts with RAB26. Interacts with PPP1R9B. Interacts with GGA1, GGA2 and GGA3.</text>
</comment>
<comment type="subcellular location">
    <subcellularLocation>
        <location evidence="2">Cell membrane</location>
        <topology evidence="2">Multi-pass membrane protein</topology>
    </subcellularLocation>
    <text evidence="2">Interaction with RAB26, GGA1, GGA2 and GGA3 mediates transport from the Golgi to the cell membrane.</text>
</comment>
<comment type="similarity">
    <text evidence="3">Belongs to the G-protein coupled receptor 1 family. Adrenergic receptor subfamily. ADRA2B sub-subfamily.</text>
</comment>
<proteinExistence type="inferred from homology"/>
<protein>
    <recommendedName>
        <fullName>Alpha-2B adrenergic receptor</fullName>
    </recommendedName>
    <alternativeName>
        <fullName>Alpha-2B adrenoreceptor</fullName>
        <shortName>Alpha-2B adrenoceptor</shortName>
        <shortName>Alpha-2BAR</shortName>
    </alternativeName>
</protein>
<gene>
    <name type="primary">ADRA2B</name>
</gene>
<evidence type="ECO:0000250" key="1"/>
<evidence type="ECO:0000250" key="2">
    <source>
        <dbReference type="UniProtKB" id="P18089"/>
    </source>
</evidence>
<evidence type="ECO:0000255" key="3">
    <source>
        <dbReference type="PROSITE-ProRule" id="PRU00521"/>
    </source>
</evidence>
<evidence type="ECO:0000256" key="4">
    <source>
        <dbReference type="SAM" id="MobiDB-lite"/>
    </source>
</evidence>
<reference key="1">
    <citation type="submission" date="1999-11" db="EMBL/GenBank/DDBJ databases">
        <authorList>
            <person name="Stanhope M.J."/>
            <person name="Madsen O.J."/>
            <person name="Waddell V.G."/>
            <person name="Cleven G.C."/>
            <person name="de Jong W.W."/>
            <person name="Springer M.S."/>
            <person name="Madsen O.O.M."/>
        </authorList>
    </citation>
    <scope>NUCLEOTIDE SEQUENCE [GENOMIC DNA]</scope>
</reference>